<sequence>MITRGEFFMIKEMYERGMSISDIARELGIDRKTVRKYIHSPNPPSKSKRKQRKSKLDPFKPYLQKRMLEDGVFNSEKLFFEIRQQGYTGGKTILKDYMKPFRETAKKKYTVRYETLPGEQMQVDWKEVGEVVIEGKKVKLSLFVATLGYSRMKYAVFTTSQDQEHLMECLIQSFKYFGGVPKKVLFDNMKTVTDGREQGVVKWNQRFSEFASYYGFIPKVCRPYRAQTKGKVERAIQYIMDHFYVGTAFESIEELNFLLHRWLDQVANRKPNATTGISPQERWAEESLKPLPLKDYDTSYLSYRKVHWDGSFSYKGEQWLLSAEYAGKEILVKERLNGDIRLYFRGEEISHVDQQKKVISFAEKIKKKQTEMAATISPVSVEVDTRPLSVYDAFLRGESS</sequence>
<proteinExistence type="evidence at protein level"/>
<accession>Q45618</accession>
<reference key="1">
    <citation type="journal article" date="1993" name="Plasmid">
        <title>On two transposable elements from Bacillus stearothermophilus.</title>
        <authorList>
            <person name="Xu K."/>
            <person name="He Z.-Q."/>
            <person name="Mao Y.-M."/>
            <person name="Shen R.-Q."/>
            <person name="Sheng Z.-J."/>
        </authorList>
    </citation>
    <scope>NUCLEOTIDE SEQUENCE [GENOMIC DNA]</scope>
    <source>
        <strain>CU21</strain>
    </source>
</reference>
<dbReference type="EMBL" id="X67861">
    <property type="protein sequence ID" value="CAA48045.1"/>
    <property type="molecule type" value="Genomic_DNA"/>
</dbReference>
<dbReference type="PIR" id="S23888">
    <property type="entry name" value="S23888"/>
</dbReference>
<dbReference type="RefSeq" id="WP_053532453.1">
    <property type="nucleotide sequence ID" value="NZ_JARULO010000066.1"/>
</dbReference>
<dbReference type="PDB" id="8B4H">
    <property type="method" value="EM"/>
    <property type="resolution" value="3.35 A"/>
    <property type="chains" value="A/B/C/D=1-400"/>
</dbReference>
<dbReference type="PDB" id="8Q4D">
    <property type="method" value="EM"/>
    <property type="resolution" value="3.62 A"/>
    <property type="chains" value="A/B/C/D=1-373"/>
</dbReference>
<dbReference type="PDBsum" id="8B4H"/>
<dbReference type="PDBsum" id="8Q4D"/>
<dbReference type="EMDB" id="EMD-15848"/>
<dbReference type="EMDB" id="EMD-18144"/>
<dbReference type="SMR" id="Q45618"/>
<dbReference type="GeneID" id="89614123"/>
<dbReference type="GO" id="GO:0003677">
    <property type="term" value="F:DNA binding"/>
    <property type="evidence" value="ECO:0007669"/>
    <property type="project" value="UniProtKB-KW"/>
</dbReference>
<dbReference type="GO" id="GO:0000150">
    <property type="term" value="F:DNA strand exchange activity"/>
    <property type="evidence" value="ECO:0007669"/>
    <property type="project" value="InterPro"/>
</dbReference>
<dbReference type="GO" id="GO:0015074">
    <property type="term" value="P:DNA integration"/>
    <property type="evidence" value="ECO:0007669"/>
    <property type="project" value="InterPro"/>
</dbReference>
<dbReference type="GO" id="GO:0032196">
    <property type="term" value="P:transposition"/>
    <property type="evidence" value="ECO:0007669"/>
    <property type="project" value="UniProtKB-KW"/>
</dbReference>
<dbReference type="Gene3D" id="1.10.10.60">
    <property type="entry name" value="Homeodomain-like"/>
    <property type="match status" value="1"/>
</dbReference>
<dbReference type="Gene3D" id="3.30.420.10">
    <property type="entry name" value="Ribonuclease H-like superfamily/Ribonuclease H"/>
    <property type="match status" value="1"/>
</dbReference>
<dbReference type="InterPro" id="IPR017894">
    <property type="entry name" value="HTH_IS21_transposase_type"/>
</dbReference>
<dbReference type="InterPro" id="IPR001584">
    <property type="entry name" value="Integrase_cat-core"/>
</dbReference>
<dbReference type="InterPro" id="IPR006120">
    <property type="entry name" value="Resolvase_HTH_dom"/>
</dbReference>
<dbReference type="InterPro" id="IPR012337">
    <property type="entry name" value="RNaseH-like_sf"/>
</dbReference>
<dbReference type="InterPro" id="IPR036397">
    <property type="entry name" value="RNaseH_sf"/>
</dbReference>
<dbReference type="NCBIfam" id="NF033546">
    <property type="entry name" value="transpos_IS21"/>
    <property type="match status" value="1"/>
</dbReference>
<dbReference type="PANTHER" id="PTHR35004:SF6">
    <property type="entry name" value="TRANSPOSASE"/>
    <property type="match status" value="1"/>
</dbReference>
<dbReference type="PANTHER" id="PTHR35004">
    <property type="entry name" value="TRANSPOSASE RV3428C-RELATED"/>
    <property type="match status" value="1"/>
</dbReference>
<dbReference type="Pfam" id="PF02796">
    <property type="entry name" value="HTH_7"/>
    <property type="match status" value="1"/>
</dbReference>
<dbReference type="Pfam" id="PF00665">
    <property type="entry name" value="rve"/>
    <property type="match status" value="1"/>
</dbReference>
<dbReference type="SUPFAM" id="SSF53098">
    <property type="entry name" value="Ribonuclease H-like"/>
    <property type="match status" value="1"/>
</dbReference>
<dbReference type="PROSITE" id="PS50531">
    <property type="entry name" value="HTH_IS21"/>
    <property type="match status" value="1"/>
</dbReference>
<dbReference type="PROSITE" id="PS50994">
    <property type="entry name" value="INTEGRASE"/>
    <property type="match status" value="1"/>
</dbReference>
<feature type="chain" id="PRO_0000075464" description="Putative transposase for insertion sequence element IS5376">
    <location>
        <begin position="1"/>
        <end position="400"/>
    </location>
</feature>
<feature type="domain" description="HTH IS21-type" evidence="3">
    <location>
        <begin position="5"/>
        <end position="67"/>
    </location>
</feature>
<feature type="domain" description="Integrase catalytic" evidence="2">
    <location>
        <begin position="113"/>
        <end position="287"/>
    </location>
</feature>
<feature type="DNA-binding region" description="H-T-H motif" evidence="3">
    <location>
        <begin position="20"/>
        <end position="39"/>
    </location>
</feature>
<feature type="region of interest" description="Disordered" evidence="4">
    <location>
        <begin position="35"/>
        <end position="55"/>
    </location>
</feature>
<feature type="helix" evidence="6">
    <location>
        <begin position="4"/>
        <end position="16"/>
    </location>
</feature>
<feature type="helix" evidence="6">
    <location>
        <begin position="20"/>
        <end position="27"/>
    </location>
</feature>
<feature type="helix" evidence="6">
    <location>
        <begin position="31"/>
        <end position="38"/>
    </location>
</feature>
<feature type="helix" evidence="6">
    <location>
        <begin position="57"/>
        <end position="59"/>
    </location>
</feature>
<feature type="helix" evidence="6">
    <location>
        <begin position="60"/>
        <end position="68"/>
    </location>
</feature>
<feature type="helix" evidence="6">
    <location>
        <begin position="75"/>
        <end position="83"/>
    </location>
</feature>
<feature type="turn" evidence="6">
    <location>
        <begin position="84"/>
        <end position="86"/>
    </location>
</feature>
<feature type="helix" evidence="6">
    <location>
        <begin position="92"/>
        <end position="103"/>
    </location>
</feature>
<feature type="strand" evidence="6">
    <location>
        <begin position="121"/>
        <end position="133"/>
    </location>
</feature>
<feature type="strand" evidence="6">
    <location>
        <begin position="136"/>
        <end position="147"/>
    </location>
</feature>
<feature type="turn" evidence="6">
    <location>
        <begin position="148"/>
        <end position="150"/>
    </location>
</feature>
<feature type="strand" evidence="6">
    <location>
        <begin position="153"/>
        <end position="159"/>
    </location>
</feature>
<feature type="helix" evidence="6">
    <location>
        <begin position="163"/>
        <end position="177"/>
    </location>
</feature>
<feature type="strand" evidence="6">
    <location>
        <begin position="182"/>
        <end position="185"/>
    </location>
</feature>
<feature type="turn" evidence="6">
    <location>
        <begin position="190"/>
        <end position="192"/>
    </location>
</feature>
<feature type="strand" evidence="6">
    <location>
        <begin position="196"/>
        <end position="199"/>
    </location>
</feature>
<feature type="helix" evidence="6">
    <location>
        <begin position="205"/>
        <end position="214"/>
    </location>
</feature>
<feature type="helix" evidence="6">
    <location>
        <begin position="226"/>
        <end position="229"/>
    </location>
</feature>
<feature type="helix" evidence="6">
    <location>
        <begin position="230"/>
        <end position="242"/>
    </location>
</feature>
<feature type="turn" evidence="6">
    <location>
        <begin position="243"/>
        <end position="246"/>
    </location>
</feature>
<feature type="helix" evidence="6">
    <location>
        <begin position="252"/>
        <end position="265"/>
    </location>
</feature>
<feature type="turn" evidence="6">
    <location>
        <begin position="266"/>
        <end position="269"/>
    </location>
</feature>
<feature type="turn" evidence="6">
    <location>
        <begin position="273"/>
        <end position="275"/>
    </location>
</feature>
<feature type="helix" evidence="6">
    <location>
        <begin position="279"/>
        <end position="281"/>
    </location>
</feature>
<feature type="turn" evidence="6">
    <location>
        <begin position="282"/>
        <end position="284"/>
    </location>
</feature>
<feature type="strand" evidence="6">
    <location>
        <begin position="303"/>
        <end position="305"/>
    </location>
</feature>
<feature type="strand" evidence="6">
    <location>
        <begin position="310"/>
        <end position="314"/>
    </location>
</feature>
<feature type="strand" evidence="6">
    <location>
        <begin position="317"/>
        <end position="320"/>
    </location>
</feature>
<feature type="helix" evidence="6">
    <location>
        <begin position="323"/>
        <end position="325"/>
    </location>
</feature>
<feature type="strand" evidence="6">
    <location>
        <begin position="329"/>
        <end position="334"/>
    </location>
</feature>
<feature type="strand" evidence="6">
    <location>
        <begin position="340"/>
        <end position="344"/>
    </location>
</feature>
<feature type="strand" evidence="6">
    <location>
        <begin position="347"/>
        <end position="349"/>
    </location>
</feature>
<feature type="strand" evidence="6">
    <location>
        <begin position="353"/>
        <end position="355"/>
    </location>
</feature>
<feature type="helix" evidence="6">
    <location>
        <begin position="361"/>
        <end position="372"/>
    </location>
</feature>
<protein>
    <recommendedName>
        <fullName>Putative transposase for insertion sequence element IS5376</fullName>
    </recommendedName>
</protein>
<comment type="function">
    <text evidence="1">Involved in the transposition of the insertion sequence.</text>
</comment>
<comment type="similarity">
    <text evidence="5">Belongs to the transposase IS21/IS408/IS1162 family.</text>
</comment>
<keyword id="KW-0002">3D-structure</keyword>
<keyword id="KW-0233">DNA recombination</keyword>
<keyword id="KW-0238">DNA-binding</keyword>
<keyword id="KW-0814">Transposable element</keyword>
<keyword id="KW-0815">Transposition</keyword>
<name>TRA6_GEOSE</name>
<evidence type="ECO:0000250" key="1"/>
<evidence type="ECO:0000255" key="2">
    <source>
        <dbReference type="PROSITE-ProRule" id="PRU00457"/>
    </source>
</evidence>
<evidence type="ECO:0000255" key="3">
    <source>
        <dbReference type="PROSITE-ProRule" id="PRU00615"/>
    </source>
</evidence>
<evidence type="ECO:0000256" key="4">
    <source>
        <dbReference type="SAM" id="MobiDB-lite"/>
    </source>
</evidence>
<evidence type="ECO:0000305" key="5"/>
<evidence type="ECO:0007829" key="6">
    <source>
        <dbReference type="PDB" id="8B4H"/>
    </source>
</evidence>
<organism>
    <name type="scientific">Geobacillus stearothermophilus</name>
    <name type="common">Bacillus stearothermophilus</name>
    <dbReference type="NCBI Taxonomy" id="1422"/>
    <lineage>
        <taxon>Bacteria</taxon>
        <taxon>Bacillati</taxon>
        <taxon>Bacillota</taxon>
        <taxon>Bacilli</taxon>
        <taxon>Bacillales</taxon>
        <taxon>Anoxybacillaceae</taxon>
        <taxon>Geobacillus</taxon>
    </lineage>
</organism>